<sequence length="397" mass="44034">MQIFVTTPSENVFGLEVAADMAYEDLLAFVEMEASVPSKDIILSLNGNPIVDTDPKATIGSLGVTDNSMLLLTTKRVAPNPSTSAQPAIPTLDFSSIQIPGLPAAQRVDPRAEQIRTQILERADSLDQLKLSNPELAEHVHDSQKFSDAFTKLQNELRAKEVERKKELQRLYADPDNEDNQKRIMEIIRQENVEESYQNAMEHHPEMFIRTDMLYINCRINGHDVKAFVDTGAQMTILSEEFCEKVGLSHMLDVKFAGVARGVGSGKILGRVHSVPLQIGSSFFPASVSVIEGDQLQFILGLDMLKRFKANVNLRTNQLEIGEEKATFLGEKDLPDEFGKLGQEKEKKQDHGSAGDAFKDEDIVNLMSLGYSREKVVVALKQTDGDVELAASLLFSQ</sequence>
<evidence type="ECO:0000250" key="1"/>
<evidence type="ECO:0000250" key="2">
    <source>
        <dbReference type="UniProtKB" id="I7HUG0"/>
    </source>
</evidence>
<evidence type="ECO:0000250" key="3">
    <source>
        <dbReference type="UniProtKB" id="P40087"/>
    </source>
</evidence>
<evidence type="ECO:0000255" key="4">
    <source>
        <dbReference type="PROSITE-ProRule" id="PRU00212"/>
    </source>
</evidence>
<evidence type="ECO:0000255" key="5">
    <source>
        <dbReference type="PROSITE-ProRule" id="PRU00214"/>
    </source>
</evidence>
<evidence type="ECO:0000305" key="6"/>
<proteinExistence type="inferred from homology"/>
<reference key="1">
    <citation type="journal article" date="2004" name="Nature">
        <title>Genome evolution in yeasts.</title>
        <authorList>
            <person name="Dujon B."/>
            <person name="Sherman D."/>
            <person name="Fischer G."/>
            <person name="Durrens P."/>
            <person name="Casaregola S."/>
            <person name="Lafontaine I."/>
            <person name="de Montigny J."/>
            <person name="Marck C."/>
            <person name="Neuveglise C."/>
            <person name="Talla E."/>
            <person name="Goffard N."/>
            <person name="Frangeul L."/>
            <person name="Aigle M."/>
            <person name="Anthouard V."/>
            <person name="Babour A."/>
            <person name="Barbe V."/>
            <person name="Barnay S."/>
            <person name="Blanchin S."/>
            <person name="Beckerich J.-M."/>
            <person name="Beyne E."/>
            <person name="Bleykasten C."/>
            <person name="Boisrame A."/>
            <person name="Boyer J."/>
            <person name="Cattolico L."/>
            <person name="Confanioleri F."/>
            <person name="de Daruvar A."/>
            <person name="Despons L."/>
            <person name="Fabre E."/>
            <person name="Fairhead C."/>
            <person name="Ferry-Dumazet H."/>
            <person name="Groppi A."/>
            <person name="Hantraye F."/>
            <person name="Hennequin C."/>
            <person name="Jauniaux N."/>
            <person name="Joyet P."/>
            <person name="Kachouri R."/>
            <person name="Kerrest A."/>
            <person name="Koszul R."/>
            <person name="Lemaire M."/>
            <person name="Lesur I."/>
            <person name="Ma L."/>
            <person name="Muller H."/>
            <person name="Nicaud J.-M."/>
            <person name="Nikolski M."/>
            <person name="Oztas S."/>
            <person name="Ozier-Kalogeropoulos O."/>
            <person name="Pellenz S."/>
            <person name="Potier S."/>
            <person name="Richard G.-F."/>
            <person name="Straub M.-L."/>
            <person name="Suleau A."/>
            <person name="Swennen D."/>
            <person name="Tekaia F."/>
            <person name="Wesolowski-Louvel M."/>
            <person name="Westhof E."/>
            <person name="Wirth B."/>
            <person name="Zeniou-Meyer M."/>
            <person name="Zivanovic Y."/>
            <person name="Bolotin-Fukuhara M."/>
            <person name="Thierry A."/>
            <person name="Bouchier C."/>
            <person name="Caudron B."/>
            <person name="Scarpelli C."/>
            <person name="Gaillardin C."/>
            <person name="Weissenbach J."/>
            <person name="Wincker P."/>
            <person name="Souciet J.-L."/>
        </authorList>
    </citation>
    <scope>NUCLEOTIDE SEQUENCE [LARGE SCALE GENOMIC DNA]</scope>
    <source>
        <strain>CLIB 122 / E 150</strain>
    </source>
</reference>
<accession>Q6CFI3</accession>
<feature type="chain" id="PRO_0000285319" description="DNA damage-inducible protein 1">
    <location>
        <begin position="1"/>
        <end position="397"/>
    </location>
</feature>
<feature type="domain" description="Ubiquitin-like" evidence="5">
    <location>
        <begin position="1"/>
        <end position="79"/>
    </location>
</feature>
<feature type="domain" description="UBA" evidence="4">
    <location>
        <begin position="357"/>
        <end position="397"/>
    </location>
</feature>
<feature type="active site" evidence="6">
    <location>
        <position position="230"/>
    </location>
</feature>
<organism>
    <name type="scientific">Yarrowia lipolytica (strain CLIB 122 / E 150)</name>
    <name type="common">Yeast</name>
    <name type="synonym">Candida lipolytica</name>
    <dbReference type="NCBI Taxonomy" id="284591"/>
    <lineage>
        <taxon>Eukaryota</taxon>
        <taxon>Fungi</taxon>
        <taxon>Dikarya</taxon>
        <taxon>Ascomycota</taxon>
        <taxon>Saccharomycotina</taxon>
        <taxon>Dipodascomycetes</taxon>
        <taxon>Dipodascales</taxon>
        <taxon>Dipodascales incertae sedis</taxon>
        <taxon>Yarrowia</taxon>
    </lineage>
</organism>
<protein>
    <recommendedName>
        <fullName>DNA damage-inducible protein 1</fullName>
        <ecNumber evidence="2">3.4.23.-</ecNumber>
    </recommendedName>
</protein>
<comment type="function">
    <text evidence="2 3">Probable aspartic protease. May be involved in the regulation of exocytosis. Acts as a linker between the 19S proteasome and polyubiquitinated proteins via UBA domain interactions with ubiquitin for their subsequent degradation. Required for S-phase checkpoint control.</text>
</comment>
<comment type="subunit">
    <text evidence="1">Binds ubiquitin and polyubiquitinated proteins.</text>
</comment>
<comment type="subcellular location">
    <subcellularLocation>
        <location evidence="1">Cytoplasm</location>
    </subcellularLocation>
</comment>
<comment type="similarity">
    <text evidence="6">Belongs to the DDI1 family.</text>
</comment>
<dbReference type="EC" id="3.4.23.-" evidence="2"/>
<dbReference type="EMBL" id="CR382128">
    <property type="protein sequence ID" value="CAG82810.1"/>
    <property type="molecule type" value="Genomic_DNA"/>
</dbReference>
<dbReference type="RefSeq" id="XP_500579.1">
    <property type="nucleotide sequence ID" value="XM_500579.1"/>
</dbReference>
<dbReference type="SMR" id="Q6CFI3"/>
<dbReference type="FunCoup" id="Q6CFI3">
    <property type="interactions" value="289"/>
</dbReference>
<dbReference type="STRING" id="284591.Q6CFI3"/>
<dbReference type="EnsemblFungi" id="CAG82810">
    <property type="protein sequence ID" value="CAG82810"/>
    <property type="gene ID" value="YALI0_B06754g"/>
</dbReference>
<dbReference type="KEGG" id="yli:2907468"/>
<dbReference type="VEuPathDB" id="FungiDB:YALI0_B06754g"/>
<dbReference type="HOGENOM" id="CLU_020435_2_0_1"/>
<dbReference type="InParanoid" id="Q6CFI3"/>
<dbReference type="OMA" id="LYTADPF"/>
<dbReference type="OrthoDB" id="8210at4891"/>
<dbReference type="Proteomes" id="UP000001300">
    <property type="component" value="Chromosome B"/>
</dbReference>
<dbReference type="GO" id="GO:0005737">
    <property type="term" value="C:cytoplasm"/>
    <property type="evidence" value="ECO:0007669"/>
    <property type="project" value="UniProtKB-SubCell"/>
</dbReference>
<dbReference type="GO" id="GO:0005886">
    <property type="term" value="C:plasma membrane"/>
    <property type="evidence" value="ECO:0007669"/>
    <property type="project" value="EnsemblFungi"/>
</dbReference>
<dbReference type="GO" id="GO:0004190">
    <property type="term" value="F:aspartic-type endopeptidase activity"/>
    <property type="evidence" value="ECO:0007669"/>
    <property type="project" value="UniProtKB-KW"/>
</dbReference>
<dbReference type="GO" id="GO:0031593">
    <property type="term" value="F:polyubiquitin modification-dependent protein binding"/>
    <property type="evidence" value="ECO:0007669"/>
    <property type="project" value="EnsemblFungi"/>
</dbReference>
<dbReference type="GO" id="GO:1904855">
    <property type="term" value="F:proteasome regulatory particle binding"/>
    <property type="evidence" value="ECO:0007669"/>
    <property type="project" value="EnsemblFungi"/>
</dbReference>
<dbReference type="GO" id="GO:0030674">
    <property type="term" value="F:protein-macromolecule adaptor activity"/>
    <property type="evidence" value="ECO:0007669"/>
    <property type="project" value="EnsemblFungi"/>
</dbReference>
<dbReference type="GO" id="GO:0000149">
    <property type="term" value="F:SNARE binding"/>
    <property type="evidence" value="ECO:0007669"/>
    <property type="project" value="EnsemblFungi"/>
</dbReference>
<dbReference type="GO" id="GO:0043130">
    <property type="term" value="F:ubiquitin binding"/>
    <property type="evidence" value="ECO:0007669"/>
    <property type="project" value="EnsemblFungi"/>
</dbReference>
<dbReference type="GO" id="GO:0045740">
    <property type="term" value="P:positive regulation of DNA replication"/>
    <property type="evidence" value="ECO:0007669"/>
    <property type="project" value="EnsemblFungi"/>
</dbReference>
<dbReference type="GO" id="GO:0009306">
    <property type="term" value="P:protein secretion"/>
    <property type="evidence" value="ECO:0007669"/>
    <property type="project" value="EnsemblFungi"/>
</dbReference>
<dbReference type="GO" id="GO:0043328">
    <property type="term" value="P:protein transport to vacuole involved in ubiquitin-dependent protein catabolic process via the multivesicular body sorting pathway"/>
    <property type="evidence" value="ECO:0007669"/>
    <property type="project" value="EnsemblFungi"/>
</dbReference>
<dbReference type="CDD" id="cd05479">
    <property type="entry name" value="RP_DDI"/>
    <property type="match status" value="1"/>
</dbReference>
<dbReference type="CDD" id="cd14309">
    <property type="entry name" value="UBA_scDdi1_like"/>
    <property type="match status" value="1"/>
</dbReference>
<dbReference type="CDD" id="cd01796">
    <property type="entry name" value="Ubl_Ddi1_like"/>
    <property type="match status" value="1"/>
</dbReference>
<dbReference type="Gene3D" id="2.40.70.10">
    <property type="entry name" value="Acid Proteases"/>
    <property type="match status" value="1"/>
</dbReference>
<dbReference type="Gene3D" id="1.10.8.10">
    <property type="entry name" value="DNA helicase RuvA subunit, C-terminal domain"/>
    <property type="match status" value="1"/>
</dbReference>
<dbReference type="Gene3D" id="3.10.20.90">
    <property type="entry name" value="Phosphatidylinositol 3-kinase Catalytic Subunit, Chain A, domain 1"/>
    <property type="match status" value="1"/>
</dbReference>
<dbReference type="InterPro" id="IPR033882">
    <property type="entry name" value="DDI1_N"/>
</dbReference>
<dbReference type="InterPro" id="IPR001995">
    <property type="entry name" value="Peptidase_A2_cat"/>
</dbReference>
<dbReference type="InterPro" id="IPR019103">
    <property type="entry name" value="Peptidase_aspartic_DDI1-type"/>
</dbReference>
<dbReference type="InterPro" id="IPR021109">
    <property type="entry name" value="Peptidase_aspartic_dom_sf"/>
</dbReference>
<dbReference type="InterPro" id="IPR015940">
    <property type="entry name" value="UBA"/>
</dbReference>
<dbReference type="InterPro" id="IPR009060">
    <property type="entry name" value="UBA-like_sf"/>
</dbReference>
<dbReference type="InterPro" id="IPR000626">
    <property type="entry name" value="Ubiquitin-like_dom"/>
</dbReference>
<dbReference type="InterPro" id="IPR029071">
    <property type="entry name" value="Ubiquitin-like_domsf"/>
</dbReference>
<dbReference type="PANTHER" id="PTHR12917">
    <property type="entry name" value="ASPARTYL PROTEASE DDI-RELATED"/>
    <property type="match status" value="1"/>
</dbReference>
<dbReference type="PANTHER" id="PTHR12917:SF1">
    <property type="entry name" value="AT13091P"/>
    <property type="match status" value="1"/>
</dbReference>
<dbReference type="Pfam" id="PF09668">
    <property type="entry name" value="Asp_protease"/>
    <property type="match status" value="1"/>
</dbReference>
<dbReference type="Pfam" id="PF00627">
    <property type="entry name" value="UBA"/>
    <property type="match status" value="1"/>
</dbReference>
<dbReference type="SMART" id="SM00165">
    <property type="entry name" value="UBA"/>
    <property type="match status" value="1"/>
</dbReference>
<dbReference type="SUPFAM" id="SSF50630">
    <property type="entry name" value="Acid proteases"/>
    <property type="match status" value="1"/>
</dbReference>
<dbReference type="SUPFAM" id="SSF46934">
    <property type="entry name" value="UBA-like"/>
    <property type="match status" value="1"/>
</dbReference>
<dbReference type="SUPFAM" id="SSF54236">
    <property type="entry name" value="Ubiquitin-like"/>
    <property type="match status" value="1"/>
</dbReference>
<dbReference type="PROSITE" id="PS50030">
    <property type="entry name" value="UBA"/>
    <property type="match status" value="1"/>
</dbReference>
<dbReference type="PROSITE" id="PS50053">
    <property type="entry name" value="UBIQUITIN_2"/>
    <property type="match status" value="1"/>
</dbReference>
<keyword id="KW-0064">Aspartyl protease</keyword>
<keyword id="KW-0963">Cytoplasm</keyword>
<keyword id="KW-0378">Hydrolase</keyword>
<keyword id="KW-0645">Protease</keyword>
<keyword id="KW-0653">Protein transport</keyword>
<keyword id="KW-1185">Reference proteome</keyword>
<keyword id="KW-0813">Transport</keyword>
<gene>
    <name type="primary">DDI1</name>
    <name type="ordered locus">YALI0B06754g</name>
</gene>
<name>DDI1_YARLI</name>